<sequence length="710" mass="78388">MPVRRYGGRYNNSSPGVSNALSPSTTAGRPLSPSPAAGSKLASTHHDPVPQEAYYVNDEADARHQQQAPFREPSVEVEVEMIDDEPPHGSQKPLSVAPYTANASNSSGRSKRNAITASGYTFYTNERQKTVYEALRSLRPLAELQEPRRVKEYAETSLKDSLYRIIEAHDVIMVAGAFFGDEGKGKTVDAVAHHPLCTCIARVNSGENAGHTVYDKAGRKFVFNLAPSGLLLPGKRNYIGPECVMDPVSFMEKEVIQLIDAGIDYRDRLFIGNVCIVTPYHKLLDLLGSAANSSTLKGMAPVHGSKVMKRGIRLDHIFNDDETLRKRLEKDMDTYLGLLKVKNLSDADVVRLCREENSDGVVRVPDYVIAFAQAKVKVEFLVKLYRDRVRHNPDFPARCDVTYELHAAVLRGEKVLLEGPQSYWLSNARTKFWESTTSADTTAAGLLAASQLNFQKFKSVVLNVHKAPGSSRVGIGACPSSFVPQDYFSAQNIKTLRDLPSETCANFEAVQRTLFRDGFPHSNDKARHNGIMAPVEYSDETGKYNIGVAMAIASAQHHGECGAVTKKPRVCGFFDCVLQHEVNSIQGPYLTISALDRGDEYDKVGVTIAYVYYNPEGKQVDVNGHVYKNGDIIRAGDPVPSEPALYHCHPIVKLIDGWRDNPIAAAKRRRNAPLPRGVCELLSTIEYFTNCKILSIGNGPNGDDIIYLRQ</sequence>
<accession>A7LBL2</accession>
<name>PURA_LEIDO</name>
<organism>
    <name type="scientific">Leishmania donovani</name>
    <dbReference type="NCBI Taxonomy" id="5661"/>
    <lineage>
        <taxon>Eukaryota</taxon>
        <taxon>Discoba</taxon>
        <taxon>Euglenozoa</taxon>
        <taxon>Kinetoplastea</taxon>
        <taxon>Metakinetoplastina</taxon>
        <taxon>Trypanosomatida</taxon>
        <taxon>Trypanosomatidae</taxon>
        <taxon>Leishmaniinae</taxon>
        <taxon>Leishmania</taxon>
    </lineage>
</organism>
<keyword id="KW-0963">Cytoplasm</keyword>
<keyword id="KW-0342">GTP-binding</keyword>
<keyword id="KW-0436">Ligase</keyword>
<keyword id="KW-0460">Magnesium</keyword>
<keyword id="KW-0479">Metal-binding</keyword>
<keyword id="KW-0547">Nucleotide-binding</keyword>
<keyword id="KW-0658">Purine biosynthesis</keyword>
<feature type="chain" id="PRO_0000399302" description="Adenylosuccinate synthetase">
    <location>
        <begin position="1"/>
        <end position="710"/>
    </location>
</feature>
<feature type="region of interest" description="Disordered" evidence="3">
    <location>
        <begin position="1"/>
        <end position="53"/>
    </location>
</feature>
<feature type="region of interest" description="Disordered" evidence="3">
    <location>
        <begin position="84"/>
        <end position="110"/>
    </location>
</feature>
<feature type="compositionally biased region" description="Polar residues" evidence="3">
    <location>
        <begin position="10"/>
        <end position="27"/>
    </location>
</feature>
<feature type="compositionally biased region" description="Polar residues" evidence="3">
    <location>
        <begin position="101"/>
        <end position="110"/>
    </location>
</feature>
<feature type="active site" description="Proton acceptor" evidence="2">
    <location>
        <position position="181"/>
    </location>
</feature>
<feature type="active site" description="Proton donor" evidence="2">
    <location>
        <position position="211"/>
    </location>
</feature>
<feature type="binding site" evidence="2">
    <location>
        <begin position="180"/>
        <end position="186"/>
    </location>
    <ligand>
        <name>GTP</name>
        <dbReference type="ChEBI" id="CHEBI:37565"/>
    </ligand>
</feature>
<feature type="binding site" description="in other chain" evidence="2">
    <location>
        <begin position="181"/>
        <end position="184"/>
    </location>
    <ligand>
        <name>IMP</name>
        <dbReference type="ChEBI" id="CHEBI:58053"/>
        <note>ligand shared between dimeric partners</note>
    </ligand>
</feature>
<feature type="binding site" evidence="2">
    <location>
        <position position="181"/>
    </location>
    <ligand>
        <name>Mg(2+)</name>
        <dbReference type="ChEBI" id="CHEBI:18420"/>
    </ligand>
</feature>
<feature type="binding site" description="in other chain" evidence="2">
    <location>
        <begin position="208"/>
        <end position="211"/>
    </location>
    <ligand>
        <name>IMP</name>
        <dbReference type="ChEBI" id="CHEBI:58053"/>
        <note>ligand shared between dimeric partners</note>
    </ligand>
</feature>
<feature type="binding site" evidence="2">
    <location>
        <begin position="210"/>
        <end position="212"/>
    </location>
    <ligand>
        <name>GTP</name>
        <dbReference type="ChEBI" id="CHEBI:37565"/>
    </ligand>
</feature>
<feature type="binding site" evidence="2">
    <location>
        <position position="210"/>
    </location>
    <ligand>
        <name>Mg(2+)</name>
        <dbReference type="ChEBI" id="CHEBI:18420"/>
    </ligand>
</feature>
<feature type="binding site" description="in other chain" evidence="2">
    <location>
        <position position="295"/>
    </location>
    <ligand>
        <name>IMP</name>
        <dbReference type="ChEBI" id="CHEBI:58053"/>
        <note>ligand shared between dimeric partners</note>
    </ligand>
</feature>
<feature type="binding site" evidence="2">
    <location>
        <position position="309"/>
    </location>
    <ligand>
        <name>IMP</name>
        <dbReference type="ChEBI" id="CHEBI:58053"/>
        <note>ligand shared between dimeric partners</note>
    </ligand>
</feature>
<feature type="binding site" description="in other chain" evidence="2">
    <location>
        <position position="421"/>
    </location>
    <ligand>
        <name>IMP</name>
        <dbReference type="ChEBI" id="CHEBI:58053"/>
        <note>ligand shared between dimeric partners</note>
    </ligand>
</feature>
<feature type="binding site" description="in other chain" evidence="2">
    <location>
        <position position="437"/>
    </location>
    <ligand>
        <name>IMP</name>
        <dbReference type="ChEBI" id="CHEBI:58053"/>
        <note>ligand shared between dimeric partners</note>
    </ligand>
</feature>
<feature type="binding site" evidence="2">
    <location>
        <begin position="563"/>
        <end position="569"/>
    </location>
    <ligand>
        <name>substrate</name>
    </ligand>
</feature>
<feature type="binding site" description="in other chain" evidence="2">
    <location>
        <position position="567"/>
    </location>
    <ligand>
        <name>IMP</name>
        <dbReference type="ChEBI" id="CHEBI:58053"/>
        <note>ligand shared between dimeric partners</note>
    </ligand>
</feature>
<feature type="binding site" evidence="2">
    <location>
        <position position="569"/>
    </location>
    <ligand>
        <name>GTP</name>
        <dbReference type="ChEBI" id="CHEBI:37565"/>
    </ligand>
</feature>
<feature type="binding site" evidence="2">
    <location>
        <begin position="697"/>
        <end position="699"/>
    </location>
    <ligand>
        <name>GTP</name>
        <dbReference type="ChEBI" id="CHEBI:37565"/>
    </ligand>
</feature>
<protein>
    <recommendedName>
        <fullName evidence="2">Adenylosuccinate synthetase</fullName>
        <shortName evidence="2">AMPSase</shortName>
        <shortName evidence="2">AdSS</shortName>
        <ecNumber evidence="2">6.3.4.4</ecNumber>
    </recommendedName>
    <alternativeName>
        <fullName evidence="2">IMP--aspartate ligase</fullName>
    </alternativeName>
</protein>
<gene>
    <name type="primary">ADSS</name>
</gene>
<reference key="1">
    <citation type="submission" date="2007-06" db="EMBL/GenBank/DDBJ databases">
        <authorList>
            <person name="Boitz J.M."/>
            <person name="Ullman B."/>
        </authorList>
    </citation>
    <scope>NUCLEOTIDE SEQUENCE [GENOMIC DNA]</scope>
</reference>
<dbReference type="EC" id="6.3.4.4" evidence="2"/>
<dbReference type="EMBL" id="EF999428">
    <property type="protein sequence ID" value="ABS11225.1"/>
    <property type="molecule type" value="Genomic_DNA"/>
</dbReference>
<dbReference type="SMR" id="A7LBL2"/>
<dbReference type="VEuPathDB" id="TriTrypDB:LdBPK_131090.1"/>
<dbReference type="VEuPathDB" id="TriTrypDB:LdCL_130016200"/>
<dbReference type="VEuPathDB" id="TriTrypDB:LDHU3_13.1340"/>
<dbReference type="UniPathway" id="UPA00075">
    <property type="reaction ID" value="UER00335"/>
</dbReference>
<dbReference type="GO" id="GO:0005737">
    <property type="term" value="C:cytoplasm"/>
    <property type="evidence" value="ECO:0007669"/>
    <property type="project" value="UniProtKB-SubCell"/>
</dbReference>
<dbReference type="GO" id="GO:0004019">
    <property type="term" value="F:adenylosuccinate synthase activity"/>
    <property type="evidence" value="ECO:0007669"/>
    <property type="project" value="UniProtKB-UniRule"/>
</dbReference>
<dbReference type="GO" id="GO:0005525">
    <property type="term" value="F:GTP binding"/>
    <property type="evidence" value="ECO:0007669"/>
    <property type="project" value="UniProtKB-UniRule"/>
</dbReference>
<dbReference type="GO" id="GO:0000287">
    <property type="term" value="F:magnesium ion binding"/>
    <property type="evidence" value="ECO:0007669"/>
    <property type="project" value="UniProtKB-UniRule"/>
</dbReference>
<dbReference type="GO" id="GO:0044208">
    <property type="term" value="P:'de novo' AMP biosynthetic process"/>
    <property type="evidence" value="ECO:0007669"/>
    <property type="project" value="UniProtKB-UniRule"/>
</dbReference>
<dbReference type="GO" id="GO:0046040">
    <property type="term" value="P:IMP metabolic process"/>
    <property type="evidence" value="ECO:0007669"/>
    <property type="project" value="TreeGrafter"/>
</dbReference>
<dbReference type="FunFam" id="1.10.300.10:FF:000005">
    <property type="entry name" value="Adenylosuccinate synthetase"/>
    <property type="match status" value="1"/>
</dbReference>
<dbReference type="FunFam" id="3.90.170.10:FF:000003">
    <property type="entry name" value="Adenylosuccinate synthetase"/>
    <property type="match status" value="1"/>
</dbReference>
<dbReference type="Gene3D" id="3.40.440.10">
    <property type="entry name" value="Adenylosuccinate Synthetase, subunit A, domain 1"/>
    <property type="match status" value="1"/>
</dbReference>
<dbReference type="Gene3D" id="1.10.300.10">
    <property type="entry name" value="Adenylosuccinate Synthetase, subunit A, domain 2"/>
    <property type="match status" value="1"/>
</dbReference>
<dbReference type="Gene3D" id="3.90.170.10">
    <property type="entry name" value="Adenylosuccinate Synthetase, subunit A, domain 3"/>
    <property type="match status" value="1"/>
</dbReference>
<dbReference type="HAMAP" id="MF_00011">
    <property type="entry name" value="Adenylosucc_synth"/>
    <property type="match status" value="1"/>
</dbReference>
<dbReference type="InterPro" id="IPR018220">
    <property type="entry name" value="Adenylosuccin_syn_GTP-bd"/>
</dbReference>
<dbReference type="InterPro" id="IPR042109">
    <property type="entry name" value="Adenylosuccinate_synth_dom1"/>
</dbReference>
<dbReference type="InterPro" id="IPR042110">
    <property type="entry name" value="Adenylosuccinate_synth_dom2"/>
</dbReference>
<dbReference type="InterPro" id="IPR042111">
    <property type="entry name" value="Adenylosuccinate_synth_dom3"/>
</dbReference>
<dbReference type="InterPro" id="IPR001114">
    <property type="entry name" value="Adenylosuccinate_synthetase"/>
</dbReference>
<dbReference type="InterPro" id="IPR027417">
    <property type="entry name" value="P-loop_NTPase"/>
</dbReference>
<dbReference type="PANTHER" id="PTHR11846">
    <property type="entry name" value="ADENYLOSUCCINATE SYNTHETASE"/>
    <property type="match status" value="1"/>
</dbReference>
<dbReference type="PANTHER" id="PTHR11846:SF0">
    <property type="entry name" value="ADENYLOSUCCINATE SYNTHETASE"/>
    <property type="match status" value="1"/>
</dbReference>
<dbReference type="Pfam" id="PF00709">
    <property type="entry name" value="Adenylsucc_synt"/>
    <property type="match status" value="1"/>
</dbReference>
<dbReference type="SMART" id="SM00788">
    <property type="entry name" value="Adenylsucc_synt"/>
    <property type="match status" value="1"/>
</dbReference>
<dbReference type="SUPFAM" id="SSF52540">
    <property type="entry name" value="P-loop containing nucleoside triphosphate hydrolases"/>
    <property type="match status" value="1"/>
</dbReference>
<dbReference type="PROSITE" id="PS01266">
    <property type="entry name" value="ADENYLOSUCCIN_SYN_1"/>
    <property type="match status" value="1"/>
</dbReference>
<proteinExistence type="inferred from homology"/>
<comment type="function">
    <text evidence="1">Plays an important role in the salvage pathway for purine nucleotide biosynthesis. Catalyzes the first committed step in the biosynthesis of AMP from IMP (By similarity).</text>
</comment>
<comment type="catalytic activity">
    <reaction evidence="2">
        <text>IMP + L-aspartate + GTP = N(6)-(1,2-dicarboxyethyl)-AMP + GDP + phosphate + 2 H(+)</text>
        <dbReference type="Rhea" id="RHEA:15753"/>
        <dbReference type="ChEBI" id="CHEBI:15378"/>
        <dbReference type="ChEBI" id="CHEBI:29991"/>
        <dbReference type="ChEBI" id="CHEBI:37565"/>
        <dbReference type="ChEBI" id="CHEBI:43474"/>
        <dbReference type="ChEBI" id="CHEBI:57567"/>
        <dbReference type="ChEBI" id="CHEBI:58053"/>
        <dbReference type="ChEBI" id="CHEBI:58189"/>
        <dbReference type="EC" id="6.3.4.4"/>
    </reaction>
</comment>
<comment type="cofactor">
    <cofactor evidence="2">
        <name>Mg(2+)</name>
        <dbReference type="ChEBI" id="CHEBI:18420"/>
    </cofactor>
    <text evidence="2">Binds 1 Mg(2+) ion per subunit.</text>
</comment>
<comment type="pathway">
    <text evidence="2">Purine metabolism; AMP biosynthesis via de novo pathway; AMP from IMP: step 1/2.</text>
</comment>
<comment type="subunit">
    <text evidence="2">Homodimer.</text>
</comment>
<comment type="subcellular location">
    <subcellularLocation>
        <location evidence="2">Cytoplasm</location>
    </subcellularLocation>
</comment>
<comment type="miscellaneous">
    <text>Parasitic protozoa lack the de novo purine biosynthesis pathway and rely exclusively on the salvage pathway for their purine nucleotide requirements.</text>
</comment>
<comment type="similarity">
    <text evidence="2">Belongs to the adenylosuccinate synthetase family.</text>
</comment>
<evidence type="ECO:0000250" key="1"/>
<evidence type="ECO:0000255" key="2">
    <source>
        <dbReference type="HAMAP-Rule" id="MF_03125"/>
    </source>
</evidence>
<evidence type="ECO:0000256" key="3">
    <source>
        <dbReference type="SAM" id="MobiDB-lite"/>
    </source>
</evidence>